<reference key="1">
    <citation type="journal article" date="2010" name="Genome Biol.">
        <title>Structure and dynamics of the pan-genome of Streptococcus pneumoniae and closely related species.</title>
        <authorList>
            <person name="Donati C."/>
            <person name="Hiller N.L."/>
            <person name="Tettelin H."/>
            <person name="Muzzi A."/>
            <person name="Croucher N.J."/>
            <person name="Angiuoli S.V."/>
            <person name="Oggioni M."/>
            <person name="Dunning Hotopp J.C."/>
            <person name="Hu F.Z."/>
            <person name="Riley D.R."/>
            <person name="Covacci A."/>
            <person name="Mitchell T.J."/>
            <person name="Bentley S.D."/>
            <person name="Kilian M."/>
            <person name="Ehrlich G.D."/>
            <person name="Rappuoli R."/>
            <person name="Moxon E.R."/>
            <person name="Masignani V."/>
        </authorList>
    </citation>
    <scope>NUCLEOTIDE SEQUENCE [LARGE SCALE GENOMIC DNA]</scope>
    <source>
        <strain>Hungary19A-6</strain>
    </source>
</reference>
<organism>
    <name type="scientific">Streptococcus pneumoniae (strain Hungary19A-6)</name>
    <dbReference type="NCBI Taxonomy" id="487214"/>
    <lineage>
        <taxon>Bacteria</taxon>
        <taxon>Bacillati</taxon>
        <taxon>Bacillota</taxon>
        <taxon>Bacilli</taxon>
        <taxon>Lactobacillales</taxon>
        <taxon>Streptococcaceae</taxon>
        <taxon>Streptococcus</taxon>
    </lineage>
</organism>
<name>PLSY_STRPI</name>
<proteinExistence type="inferred from homology"/>
<feature type="chain" id="PRO_1000136126" description="Glycerol-3-phosphate acyltransferase">
    <location>
        <begin position="1"/>
        <end position="213"/>
    </location>
</feature>
<feature type="transmembrane region" description="Helical" evidence="1">
    <location>
        <begin position="2"/>
        <end position="22"/>
    </location>
</feature>
<feature type="transmembrane region" description="Helical" evidence="1">
    <location>
        <begin position="52"/>
        <end position="74"/>
    </location>
</feature>
<feature type="transmembrane region" description="Helical" evidence="1">
    <location>
        <begin position="81"/>
        <end position="100"/>
    </location>
</feature>
<feature type="transmembrane region" description="Helical" evidence="1">
    <location>
        <begin position="112"/>
        <end position="132"/>
    </location>
</feature>
<feature type="transmembrane region" description="Helical" evidence="1">
    <location>
        <begin position="143"/>
        <end position="163"/>
    </location>
</feature>
<feature type="transmembrane region" description="Helical" evidence="1">
    <location>
        <begin position="164"/>
        <end position="184"/>
    </location>
</feature>
<protein>
    <recommendedName>
        <fullName evidence="1">Glycerol-3-phosphate acyltransferase</fullName>
    </recommendedName>
    <alternativeName>
        <fullName evidence="1">Acyl-PO4 G3P acyltransferase</fullName>
    </alternativeName>
    <alternativeName>
        <fullName evidence="1">Acyl-phosphate--glycerol-3-phosphate acyltransferase</fullName>
    </alternativeName>
    <alternativeName>
        <fullName evidence="1">G3P acyltransferase</fullName>
        <shortName evidence="1">GPAT</shortName>
        <ecNumber evidence="1">2.3.1.275</ecNumber>
    </alternativeName>
    <alternativeName>
        <fullName evidence="1">Lysophosphatidic acid synthase</fullName>
        <shortName evidence="1">LPA synthase</shortName>
    </alternativeName>
</protein>
<accession>B1IB20</accession>
<keyword id="KW-1003">Cell membrane</keyword>
<keyword id="KW-0444">Lipid biosynthesis</keyword>
<keyword id="KW-0443">Lipid metabolism</keyword>
<keyword id="KW-0472">Membrane</keyword>
<keyword id="KW-0594">Phospholipid biosynthesis</keyword>
<keyword id="KW-1208">Phospholipid metabolism</keyword>
<keyword id="KW-0808">Transferase</keyword>
<keyword id="KW-0812">Transmembrane</keyword>
<keyword id="KW-1133">Transmembrane helix</keyword>
<dbReference type="EC" id="2.3.1.275" evidence="1"/>
<dbReference type="EMBL" id="CP000936">
    <property type="protein sequence ID" value="ACA35498.1"/>
    <property type="molecule type" value="Genomic_DNA"/>
</dbReference>
<dbReference type="RefSeq" id="WP_000628791.1">
    <property type="nucleotide sequence ID" value="NC_010380.1"/>
</dbReference>
<dbReference type="SMR" id="B1IB20"/>
<dbReference type="KEGG" id="spv:SPH_0951"/>
<dbReference type="HOGENOM" id="CLU_081254_4_0_9"/>
<dbReference type="UniPathway" id="UPA00085"/>
<dbReference type="Proteomes" id="UP000002163">
    <property type="component" value="Chromosome"/>
</dbReference>
<dbReference type="GO" id="GO:0005886">
    <property type="term" value="C:plasma membrane"/>
    <property type="evidence" value="ECO:0007669"/>
    <property type="project" value="UniProtKB-SubCell"/>
</dbReference>
<dbReference type="GO" id="GO:0043772">
    <property type="term" value="F:acyl-phosphate glycerol-3-phosphate acyltransferase activity"/>
    <property type="evidence" value="ECO:0007669"/>
    <property type="project" value="UniProtKB-UniRule"/>
</dbReference>
<dbReference type="GO" id="GO:0008654">
    <property type="term" value="P:phospholipid biosynthetic process"/>
    <property type="evidence" value="ECO:0007669"/>
    <property type="project" value="UniProtKB-UniRule"/>
</dbReference>
<dbReference type="HAMAP" id="MF_01043">
    <property type="entry name" value="PlsY"/>
    <property type="match status" value="1"/>
</dbReference>
<dbReference type="InterPro" id="IPR003811">
    <property type="entry name" value="G3P_acylTferase_PlsY"/>
</dbReference>
<dbReference type="NCBIfam" id="TIGR00023">
    <property type="entry name" value="glycerol-3-phosphate 1-O-acyltransferase PlsY"/>
    <property type="match status" value="1"/>
</dbReference>
<dbReference type="PANTHER" id="PTHR30309:SF0">
    <property type="entry name" value="GLYCEROL-3-PHOSPHATE ACYLTRANSFERASE-RELATED"/>
    <property type="match status" value="1"/>
</dbReference>
<dbReference type="PANTHER" id="PTHR30309">
    <property type="entry name" value="INNER MEMBRANE PROTEIN YGIH"/>
    <property type="match status" value="1"/>
</dbReference>
<dbReference type="Pfam" id="PF02660">
    <property type="entry name" value="G3P_acyltransf"/>
    <property type="match status" value="1"/>
</dbReference>
<dbReference type="SMART" id="SM01207">
    <property type="entry name" value="G3P_acyltransf"/>
    <property type="match status" value="1"/>
</dbReference>
<gene>
    <name evidence="1" type="primary">plsY</name>
    <name type="ordered locus">SPH_0951</name>
</gene>
<evidence type="ECO:0000255" key="1">
    <source>
        <dbReference type="HAMAP-Rule" id="MF_01043"/>
    </source>
</evidence>
<sequence>MITIVLLILAYLLGSIPSGLWIGQVFFQINLREHGSGNTGTTNTFRILGKKAGMATFVIDFFKGTLATLLPIIFHLQGVSPLIFGLLAVIGHTFPIFAGFKGGKAVATSAGVIFGFAPIFCLYLAIIFFGALYLGSMISLSSVTASIAAVIGVLLFPLFGFILSNYDSLFITIILALASLIIIRHKDNIARIKNKTENLVPWGLNLTHQDPKK</sequence>
<comment type="function">
    <text evidence="1">Catalyzes the transfer of an acyl group from acyl-phosphate (acyl-PO(4)) to glycerol-3-phosphate (G3P) to form lysophosphatidic acid (LPA). This enzyme utilizes acyl-phosphate as fatty acyl donor, but not acyl-CoA or acyl-ACP.</text>
</comment>
<comment type="catalytic activity">
    <reaction evidence="1">
        <text>an acyl phosphate + sn-glycerol 3-phosphate = a 1-acyl-sn-glycero-3-phosphate + phosphate</text>
        <dbReference type="Rhea" id="RHEA:34075"/>
        <dbReference type="ChEBI" id="CHEBI:43474"/>
        <dbReference type="ChEBI" id="CHEBI:57597"/>
        <dbReference type="ChEBI" id="CHEBI:57970"/>
        <dbReference type="ChEBI" id="CHEBI:59918"/>
        <dbReference type="EC" id="2.3.1.275"/>
    </reaction>
</comment>
<comment type="pathway">
    <text evidence="1">Lipid metabolism; phospholipid metabolism.</text>
</comment>
<comment type="subunit">
    <text evidence="1">Probably interacts with PlsX.</text>
</comment>
<comment type="subcellular location">
    <subcellularLocation>
        <location evidence="1">Cell membrane</location>
        <topology evidence="1">Multi-pass membrane protein</topology>
    </subcellularLocation>
</comment>
<comment type="similarity">
    <text evidence="1">Belongs to the PlsY family.</text>
</comment>